<feature type="initiator methionine" description="Removed" evidence="5">
    <location>
        <position position="1"/>
    </location>
</feature>
<feature type="chain" id="PRO_0000144648" description="V-type proton ATPase subunit B">
    <location>
        <begin position="2"/>
        <end position="517"/>
    </location>
</feature>
<feature type="region of interest" description="Disordered" evidence="2">
    <location>
        <begin position="487"/>
        <end position="517"/>
    </location>
</feature>
<feature type="compositionally biased region" description="Basic and acidic residues" evidence="2">
    <location>
        <begin position="500"/>
        <end position="511"/>
    </location>
</feature>
<feature type="binding site" evidence="1">
    <location>
        <position position="381"/>
    </location>
    <ligand>
        <name>ATP</name>
        <dbReference type="ChEBI" id="CHEBI:30616"/>
    </ligand>
</feature>
<feature type="modified residue" description="Phosphoserine" evidence="15 17">
    <location>
        <position position="4"/>
    </location>
</feature>
<feature type="modified residue" description="Phosphoserine" evidence="17 18">
    <location>
        <position position="137"/>
    </location>
</feature>
<feature type="modified residue" description="Phosphoserine" evidence="17">
    <location>
        <position position="503"/>
    </location>
</feature>
<feature type="modified residue" description="Phosphoserine" evidence="17">
    <location>
        <position position="504"/>
    </location>
</feature>
<feature type="modified residue" description="Phosphoserine; by ATM or ATR" evidence="16 18">
    <location>
        <position position="511"/>
    </location>
</feature>
<feature type="modified residue" description="Phosphoserine" evidence="16 18">
    <location>
        <position position="515"/>
    </location>
</feature>
<feature type="cross-link" description="Glycyl lysine isopeptide (Lys-Gly) (interchain with G-Cter in ubiquitin)" evidence="19">
    <location>
        <position position="14"/>
    </location>
</feature>
<feature type="cross-link" description="Glycyl lysine isopeptide (Lys-Gly) (interchain with G-Cter in ubiquitin)" evidence="19">
    <location>
        <position position="508"/>
    </location>
</feature>
<feature type="sequence conflict" description="In Ref. 8; AA sequence." evidence="9" ref="8">
    <original>K</original>
    <variation>V</variation>
    <location>
        <position position="14"/>
    </location>
</feature>
<feature type="sequence conflict" description="In Ref. 1; AAA66890." evidence="9" ref="1">
    <original>V</original>
    <variation>L</variation>
    <location>
        <position position="79"/>
    </location>
</feature>
<feature type="sequence conflict" description="In Ref. 7; AAA30389." evidence="9" ref="7">
    <original>Q</original>
    <variation>R</variation>
    <location>
        <position position="227"/>
    </location>
</feature>
<feature type="sequence conflict" description="In Ref. 1; AAA66890." evidence="9" ref="1">
    <original>DTRSSGKKKDASQEESLI</original>
    <variation>TQEAPVRRRTPAKKNL</variation>
    <location>
        <begin position="500"/>
        <end position="517"/>
    </location>
</feature>
<feature type="turn" evidence="21">
    <location>
        <begin position="14"/>
        <end position="19"/>
    </location>
</feature>
<feature type="strand" evidence="21">
    <location>
        <begin position="26"/>
        <end position="28"/>
    </location>
</feature>
<feature type="strand" evidence="21">
    <location>
        <begin position="33"/>
        <end position="35"/>
    </location>
</feature>
<feature type="strand" evidence="21">
    <location>
        <begin position="38"/>
        <end position="43"/>
    </location>
</feature>
<feature type="strand" evidence="21">
    <location>
        <begin position="49"/>
        <end position="56"/>
    </location>
</feature>
<feature type="strand" evidence="21">
    <location>
        <begin position="62"/>
        <end position="71"/>
    </location>
</feature>
<feature type="strand" evidence="21">
    <location>
        <begin position="74"/>
        <end position="79"/>
    </location>
</feature>
<feature type="turn" evidence="21">
    <location>
        <begin position="88"/>
        <end position="90"/>
    </location>
</feature>
<feature type="strand" evidence="21">
    <location>
        <begin position="92"/>
        <end position="99"/>
    </location>
</feature>
<feature type="strand" evidence="21">
    <location>
        <begin position="101"/>
        <end position="104"/>
    </location>
</feature>
<feature type="helix" evidence="21">
    <location>
        <begin position="106"/>
        <end position="108"/>
    </location>
</feature>
<feature type="strand" evidence="23">
    <location>
        <begin position="112"/>
        <end position="114"/>
    </location>
</feature>
<feature type="strand" evidence="21">
    <location>
        <begin position="121"/>
        <end position="123"/>
    </location>
</feature>
<feature type="strand" evidence="21">
    <location>
        <begin position="129"/>
        <end position="135"/>
    </location>
</feature>
<feature type="turn" evidence="22">
    <location>
        <begin position="141"/>
        <end position="143"/>
    </location>
</feature>
<feature type="strand" evidence="24">
    <location>
        <begin position="149"/>
        <end position="152"/>
    </location>
</feature>
<feature type="helix" evidence="21">
    <location>
        <begin position="156"/>
        <end position="160"/>
    </location>
</feature>
<feature type="strand" evidence="22">
    <location>
        <begin position="164"/>
        <end position="167"/>
    </location>
</feature>
<feature type="strand" evidence="23">
    <location>
        <begin position="172"/>
        <end position="174"/>
    </location>
</feature>
<feature type="strand" evidence="21">
    <location>
        <begin position="176"/>
        <end position="178"/>
    </location>
</feature>
<feature type="helix" evidence="21">
    <location>
        <begin position="180"/>
        <end position="190"/>
    </location>
</feature>
<feature type="strand" evidence="24">
    <location>
        <begin position="192"/>
        <end position="194"/>
    </location>
</feature>
<feature type="helix" evidence="24">
    <location>
        <begin position="195"/>
        <end position="198"/>
    </location>
</feature>
<feature type="turn" evidence="24">
    <location>
        <begin position="199"/>
        <end position="201"/>
    </location>
</feature>
<feature type="strand" evidence="21">
    <location>
        <begin position="209"/>
        <end position="217"/>
    </location>
</feature>
<feature type="helix" evidence="21">
    <location>
        <begin position="219"/>
        <end position="231"/>
    </location>
</feature>
<feature type="helix" evidence="21">
    <location>
        <begin position="234"/>
        <end position="237"/>
    </location>
</feature>
<feature type="strand" evidence="21">
    <location>
        <begin position="240"/>
        <end position="247"/>
    </location>
</feature>
<feature type="turn" evidence="21">
    <location>
        <begin position="251"/>
        <end position="253"/>
    </location>
</feature>
<feature type="helix" evidence="21">
    <location>
        <begin position="254"/>
        <end position="268"/>
    </location>
</feature>
<feature type="strand" evidence="21">
    <location>
        <begin position="273"/>
        <end position="279"/>
    </location>
</feature>
<feature type="helix" evidence="21">
    <location>
        <begin position="281"/>
        <end position="294"/>
    </location>
</feature>
<feature type="turn" evidence="21">
    <location>
        <begin position="300"/>
        <end position="303"/>
    </location>
</feature>
<feature type="helix" evidence="21">
    <location>
        <begin position="308"/>
        <end position="316"/>
    </location>
</feature>
<feature type="strand" evidence="21">
    <location>
        <begin position="320"/>
        <end position="322"/>
    </location>
</feature>
<feature type="strand" evidence="21">
    <location>
        <begin position="325"/>
        <end position="331"/>
    </location>
</feature>
<feature type="strand" evidence="23">
    <location>
        <begin position="334"/>
        <end position="336"/>
    </location>
</feature>
<feature type="helix" evidence="20">
    <location>
        <begin position="338"/>
        <end position="340"/>
    </location>
</feature>
<feature type="helix" evidence="21">
    <location>
        <begin position="345"/>
        <end position="353"/>
    </location>
</feature>
<feature type="strand" evidence="21">
    <location>
        <begin position="354"/>
        <end position="360"/>
    </location>
</feature>
<feature type="helix" evidence="21">
    <location>
        <begin position="362"/>
        <end position="367"/>
    </location>
</feature>
<feature type="strand" evidence="21">
    <location>
        <begin position="373"/>
        <end position="380"/>
    </location>
</feature>
<feature type="helix" evidence="22">
    <location>
        <begin position="381"/>
        <end position="383"/>
    </location>
</feature>
<feature type="turn" evidence="21">
    <location>
        <begin position="384"/>
        <end position="386"/>
    </location>
</feature>
<feature type="strand" evidence="21">
    <location>
        <begin position="388"/>
        <end position="392"/>
    </location>
</feature>
<feature type="helix" evidence="21">
    <location>
        <begin position="396"/>
        <end position="420"/>
    </location>
</feature>
<feature type="turn" evidence="21">
    <location>
        <begin position="421"/>
        <end position="424"/>
    </location>
</feature>
<feature type="helix" evidence="21">
    <location>
        <begin position="427"/>
        <end position="442"/>
    </location>
</feature>
<feature type="helix" evidence="21">
    <location>
        <begin position="454"/>
        <end position="467"/>
    </location>
</feature>
<feature type="turn" evidence="21">
    <location>
        <begin position="470"/>
        <end position="472"/>
    </location>
</feature>
<feature type="helix" evidence="21">
    <location>
        <begin position="478"/>
        <end position="484"/>
    </location>
</feature>
<protein>
    <recommendedName>
        <fullName>V-type proton ATPase subunit B</fullName>
        <shortName>V-ATPase subunit B</shortName>
    </recommendedName>
    <alternativeName>
        <fullName>V-ATPase 57 kDa subunit</fullName>
    </alternativeName>
    <alternativeName>
        <fullName>Vacuolar proton pump subunit B</fullName>
    </alternativeName>
</protein>
<proteinExistence type="evidence at protein level"/>
<evidence type="ECO:0000250" key="1">
    <source>
        <dbReference type="UniProtKB" id="P21281"/>
    </source>
</evidence>
<evidence type="ECO:0000256" key="2">
    <source>
        <dbReference type="SAM" id="MobiDB-lite"/>
    </source>
</evidence>
<evidence type="ECO:0000269" key="3">
    <source>
    </source>
</evidence>
<evidence type="ECO:0000269" key="4">
    <source>
    </source>
</evidence>
<evidence type="ECO:0000269" key="5">
    <source>
    </source>
</evidence>
<evidence type="ECO:0000269" key="6">
    <source>
    </source>
</evidence>
<evidence type="ECO:0000269" key="7">
    <source>
    </source>
</evidence>
<evidence type="ECO:0000269" key="8">
    <source>
    </source>
</evidence>
<evidence type="ECO:0000305" key="9"/>
<evidence type="ECO:0007744" key="10">
    <source>
        <dbReference type="PDB" id="3J9T"/>
    </source>
</evidence>
<evidence type="ECO:0007744" key="11">
    <source>
        <dbReference type="PDB" id="3J9U"/>
    </source>
</evidence>
<evidence type="ECO:0007744" key="12">
    <source>
        <dbReference type="PDB" id="3J9V"/>
    </source>
</evidence>
<evidence type="ECO:0007744" key="13">
    <source>
        <dbReference type="PDB" id="5BW9"/>
    </source>
</evidence>
<evidence type="ECO:0007744" key="14">
    <source>
        <dbReference type="PDB" id="5D80"/>
    </source>
</evidence>
<evidence type="ECO:0007744" key="15">
    <source>
    </source>
</evidence>
<evidence type="ECO:0007744" key="16">
    <source>
    </source>
</evidence>
<evidence type="ECO:0007744" key="17">
    <source>
    </source>
</evidence>
<evidence type="ECO:0007744" key="18">
    <source>
    </source>
</evidence>
<evidence type="ECO:0007744" key="19">
    <source>
    </source>
</evidence>
<evidence type="ECO:0007829" key="20">
    <source>
        <dbReference type="PDB" id="7TMM"/>
    </source>
</evidence>
<evidence type="ECO:0007829" key="21">
    <source>
        <dbReference type="PDB" id="7TMO"/>
    </source>
</evidence>
<evidence type="ECO:0007829" key="22">
    <source>
        <dbReference type="PDB" id="7TMP"/>
    </source>
</evidence>
<evidence type="ECO:0007829" key="23">
    <source>
        <dbReference type="PDB" id="7TMQ"/>
    </source>
</evidence>
<evidence type="ECO:0007829" key="24">
    <source>
        <dbReference type="PDB" id="7TMR"/>
    </source>
</evidence>
<organism>
    <name type="scientific">Saccharomyces cerevisiae (strain ATCC 204508 / S288c)</name>
    <name type="common">Baker's yeast</name>
    <dbReference type="NCBI Taxonomy" id="559292"/>
    <lineage>
        <taxon>Eukaryota</taxon>
        <taxon>Fungi</taxon>
        <taxon>Dikarya</taxon>
        <taxon>Ascomycota</taxon>
        <taxon>Saccharomycotina</taxon>
        <taxon>Saccharomycetes</taxon>
        <taxon>Saccharomycetales</taxon>
        <taxon>Saccharomycetaceae</taxon>
        <taxon>Saccharomyces</taxon>
    </lineage>
</organism>
<name>VATB_YEAST</name>
<sequence length="517" mass="57749">MVLSDKELFAINKKAVEQGFNVKPRLNYNTVSGVNGPLVILEKVKFPRYNEIVNLTLPDGTVRQGQVLEIRGDRAIVQVFEGTSGIDVKKTTVEFTGESLRIPVSEDMLGRIFDGSGRPIDNGPKVFAEDYLDINGSPINPYARIYPEEMISTGVSAIDTMNSIARGQKIPIFSASGLPHNEIAAQICRQAGLVRPTKDVHDGHEENFSIVFAAMGVNLETARFFKQDFEENGSLERTSLFLNLANDPTIERIITPRLALTTAEYLAYQTERHVLTILTDMSSYADALREVSAAREEVPGRRGYPGYMYTDLSTIYERAGRVEGRNGSITQIPILTMPNDDITHPIPDLTGYITEGQIFVDRQLHNKGIYPPINVLPSLSRLMKSAIGEGMTRKDHGDVSNQLYAKYAIGKDAAAMKAVVGEEALSIEDKLSLEFLEKFEKTFITQGAYEDRTVFESLDQAWSLLRIYPKEMLNRISPKILDEFYDRARDDADEDEEDPDTRSSGKKKDASQEESLI</sequence>
<accession>P16140</accession>
<accession>D6VQC4</accession>
<accession>P32123</accession>
<reference key="1">
    <citation type="journal article" date="1989" name="J. Biol. Chem.">
        <title>A conserved gene encoding the 57-kDa subunit of the yeast vacuolar H+-ATPase.</title>
        <authorList>
            <person name="Nelson H."/>
            <person name="Mandiyan S."/>
            <person name="Nelson N."/>
        </authorList>
    </citation>
    <scope>NUCLEOTIDE SEQUENCE [GENOMIC DNA]</scope>
</reference>
<reference key="2">
    <citation type="journal article" date="1989" name="J. Biol. Chem.">
        <authorList>
            <person name="Nelson H."/>
            <person name="Mandiyan S."/>
            <person name="Nelson N."/>
        </authorList>
    </citation>
    <scope>ERRATUM OF PUBMED:2521486</scope>
    <scope>SEQUENCE REVISION</scope>
</reference>
<reference key="3">
    <citation type="journal article" date="1994" name="Yeast">
        <title>The sequence of 29.7 kb from the right arm of chromosome II reveals 13 complete open reading frames, of which ten correspond to new genes.</title>
        <authorList>
            <person name="Becam A.-M."/>
            <person name="Cullin C."/>
            <person name="Grzybowska E."/>
            <person name="Lacroute F."/>
            <person name="Nasr F."/>
            <person name="Ozier-Kalogeropoulos O."/>
            <person name="Palucha A."/>
            <person name="Slonimski P.P."/>
            <person name="Zagulski M."/>
            <person name="Herbert C.J."/>
        </authorList>
    </citation>
    <scope>NUCLEOTIDE SEQUENCE [GENOMIC DNA]</scope>
    <source>
        <strain>ATCC 204508 / S288c</strain>
    </source>
</reference>
<reference key="4">
    <citation type="journal article" date="1994" name="EMBO J.">
        <title>Complete DNA sequence of yeast chromosome II.</title>
        <authorList>
            <person name="Feldmann H."/>
            <person name="Aigle M."/>
            <person name="Aljinovic G."/>
            <person name="Andre B."/>
            <person name="Baclet M.C."/>
            <person name="Barthe C."/>
            <person name="Baur A."/>
            <person name="Becam A.-M."/>
            <person name="Biteau N."/>
            <person name="Boles E."/>
            <person name="Brandt T."/>
            <person name="Brendel M."/>
            <person name="Brueckner M."/>
            <person name="Bussereau F."/>
            <person name="Christiansen C."/>
            <person name="Contreras R."/>
            <person name="Crouzet M."/>
            <person name="Cziepluch C."/>
            <person name="Demolis N."/>
            <person name="Delaveau T."/>
            <person name="Doignon F."/>
            <person name="Domdey H."/>
            <person name="Duesterhus S."/>
            <person name="Dubois E."/>
            <person name="Dujon B."/>
            <person name="El Bakkoury M."/>
            <person name="Entian K.-D."/>
            <person name="Feuermann M."/>
            <person name="Fiers W."/>
            <person name="Fobo G.M."/>
            <person name="Fritz C."/>
            <person name="Gassenhuber J."/>
            <person name="Glansdorff N."/>
            <person name="Goffeau A."/>
            <person name="Grivell L.A."/>
            <person name="de Haan M."/>
            <person name="Hein C."/>
            <person name="Herbert C.J."/>
            <person name="Hollenberg C.P."/>
            <person name="Holmstroem K."/>
            <person name="Jacq C."/>
            <person name="Jacquet M."/>
            <person name="Jauniaux J.-C."/>
            <person name="Jonniaux J.-L."/>
            <person name="Kallesoee T."/>
            <person name="Kiesau P."/>
            <person name="Kirchrath L."/>
            <person name="Koetter P."/>
            <person name="Korol S."/>
            <person name="Liebl S."/>
            <person name="Logghe M."/>
            <person name="Lohan A.J.E."/>
            <person name="Louis E.J."/>
            <person name="Li Z.Y."/>
            <person name="Maat M.J."/>
            <person name="Mallet L."/>
            <person name="Mannhaupt G."/>
            <person name="Messenguy F."/>
            <person name="Miosga T."/>
            <person name="Molemans F."/>
            <person name="Mueller S."/>
            <person name="Nasr F."/>
            <person name="Obermaier B."/>
            <person name="Perea J."/>
            <person name="Pierard A."/>
            <person name="Piravandi E."/>
            <person name="Pohl F.M."/>
            <person name="Pohl T.M."/>
            <person name="Potier S."/>
            <person name="Proft M."/>
            <person name="Purnelle B."/>
            <person name="Ramezani Rad M."/>
            <person name="Rieger M."/>
            <person name="Rose M."/>
            <person name="Schaaff-Gerstenschlaeger I."/>
            <person name="Scherens B."/>
            <person name="Schwarzlose C."/>
            <person name="Skala J."/>
            <person name="Slonimski P.P."/>
            <person name="Smits P.H.M."/>
            <person name="Souciet J.-L."/>
            <person name="Steensma H.Y."/>
            <person name="Stucka R."/>
            <person name="Urrestarazu L.A."/>
            <person name="van der Aart Q.J.M."/>
            <person name="Van Dyck L."/>
            <person name="Vassarotti A."/>
            <person name="Vetter I."/>
            <person name="Vierendeels F."/>
            <person name="Vissers S."/>
            <person name="Wagner G."/>
            <person name="de Wergifosse P."/>
            <person name="Wolfe K.H."/>
            <person name="Zagulski M."/>
            <person name="Zimmermann F.K."/>
            <person name="Mewes H.-W."/>
            <person name="Kleine K."/>
        </authorList>
    </citation>
    <scope>NUCLEOTIDE SEQUENCE [LARGE SCALE GENOMIC DNA]</scope>
    <source>
        <strain>ATCC 204508 / S288c</strain>
    </source>
</reference>
<reference key="5">
    <citation type="journal article" date="2014" name="G3 (Bethesda)">
        <title>The reference genome sequence of Saccharomyces cerevisiae: Then and now.</title>
        <authorList>
            <person name="Engel S.R."/>
            <person name="Dietrich F.S."/>
            <person name="Fisk D.G."/>
            <person name="Binkley G."/>
            <person name="Balakrishnan R."/>
            <person name="Costanzo M.C."/>
            <person name="Dwight S.S."/>
            <person name="Hitz B.C."/>
            <person name="Karra K."/>
            <person name="Nash R.S."/>
            <person name="Weng S."/>
            <person name="Wong E.D."/>
            <person name="Lloyd P."/>
            <person name="Skrzypek M.S."/>
            <person name="Miyasato S.R."/>
            <person name="Simison M."/>
            <person name="Cherry J.M."/>
        </authorList>
    </citation>
    <scope>GENOME REANNOTATION</scope>
    <source>
        <strain>ATCC 204508 / S288c</strain>
    </source>
</reference>
<reference key="6">
    <citation type="journal article" date="2007" name="Genome Res.">
        <title>Approaching a complete repository of sequence-verified protein-encoding clones for Saccharomyces cerevisiae.</title>
        <authorList>
            <person name="Hu Y."/>
            <person name="Rolfs A."/>
            <person name="Bhullar B."/>
            <person name="Murthy T.V.S."/>
            <person name="Zhu C."/>
            <person name="Berger M.F."/>
            <person name="Camargo A.A."/>
            <person name="Kelley F."/>
            <person name="McCarron S."/>
            <person name="Jepson D."/>
            <person name="Richardson A."/>
            <person name="Raphael J."/>
            <person name="Moreira D."/>
            <person name="Taycher E."/>
            <person name="Zuo D."/>
            <person name="Mohr S."/>
            <person name="Kane M.F."/>
            <person name="Williamson J."/>
            <person name="Simpson A.J.G."/>
            <person name="Bulyk M.L."/>
            <person name="Harlow E."/>
            <person name="Marsischky G."/>
            <person name="Kolodner R.D."/>
            <person name="LaBaer J."/>
        </authorList>
    </citation>
    <scope>NUCLEOTIDE SEQUENCE [GENOMIC DNA]</scope>
    <source>
        <strain>ATCC 204508 / S288c</strain>
    </source>
</reference>
<reference key="7">
    <citation type="journal article" date="1992" name="J. Biol. Chem.">
        <title>Differential expression of the 'B' subunit of the vacuolar H(+)-ATPase in bovine tissues.</title>
        <authorList>
            <person name="Puopolo K."/>
            <person name="Kumamoto C."/>
            <person name="Adachi I."/>
            <person name="Magner R."/>
            <person name="Forgac M."/>
        </authorList>
    </citation>
    <scope>NUCLEOTIDE SEQUENCE [MRNA] OF 103-517</scope>
</reference>
<reference key="8">
    <citation type="journal article" date="1990" name="Mol. Cell. Biol.">
        <title>Role of vacuolar acidification in protein sorting and zymogen activation: a genetic analysis of the yeast vacuolar proton-translocating ATPase.</title>
        <authorList>
            <person name="Yamashiro C.T."/>
            <person name="Kane P.M."/>
            <person name="Wolczyk D.F."/>
            <person name="Preston R.A."/>
            <person name="Stevens T.H."/>
        </authorList>
    </citation>
    <scope>PROTEIN SEQUENCE OF 13-28</scope>
    <scope>FUNCTION</scope>
    <scope>SUBCELLULAR LOCATION</scope>
</reference>
<reference key="9">
    <citation type="journal article" date="2001" name="Nat. Cell Biol.">
        <title>Skp1 forms multiple protein complexes, including RAVE, a regulator of V-ATPase assembly.</title>
        <authorList>
            <person name="Seol J.H."/>
            <person name="Shevchenko A."/>
            <person name="Shevchenko A."/>
            <person name="Deshaies R.J."/>
        </authorList>
    </citation>
    <scope>INTERACTION WITH RAV1 AND RAV2</scope>
</reference>
<reference key="10">
    <citation type="journal article" date="2003" name="Nature">
        <title>Global analysis of protein expression in yeast.</title>
        <authorList>
            <person name="Ghaemmaghami S."/>
            <person name="Huh W.-K."/>
            <person name="Bower K."/>
            <person name="Howson R.W."/>
            <person name="Belle A."/>
            <person name="Dephoure N."/>
            <person name="O'Shea E.K."/>
            <person name="Weissman J.S."/>
        </authorList>
    </citation>
    <scope>LEVEL OF PROTEIN EXPRESSION [LARGE SCALE ANALYSIS]</scope>
</reference>
<reference key="11">
    <citation type="journal article" date="2005" name="Mol. Cell. Proteomics">
        <title>Quantitative phosphoproteomics applied to the yeast pheromone signaling pathway.</title>
        <authorList>
            <person name="Gruhler A."/>
            <person name="Olsen J.V."/>
            <person name="Mohammed S."/>
            <person name="Mortensen P."/>
            <person name="Faergeman N.J."/>
            <person name="Mann M."/>
            <person name="Jensen O.N."/>
        </authorList>
    </citation>
    <scope>PHOSPHORYLATION [LARGE SCALE ANALYSIS] AT SER-4</scope>
    <scope>IDENTIFICATION BY MASS SPECTROMETRY [LARGE SCALE ANALYSIS]</scope>
    <source>
        <strain>YAL6B</strain>
    </source>
</reference>
<reference key="12">
    <citation type="journal article" date="2007" name="J. Proteome Res.">
        <title>Large-scale phosphorylation analysis of alpha-factor-arrested Saccharomyces cerevisiae.</title>
        <authorList>
            <person name="Li X."/>
            <person name="Gerber S.A."/>
            <person name="Rudner A.D."/>
            <person name="Beausoleil S.A."/>
            <person name="Haas W."/>
            <person name="Villen J."/>
            <person name="Elias J.E."/>
            <person name="Gygi S.P."/>
        </authorList>
    </citation>
    <scope>PHOSPHORYLATION [LARGE SCALE ANALYSIS] AT SER-511 AND SER-515</scope>
    <scope>IDENTIFICATION BY MASS SPECTROMETRY [LARGE SCALE ANALYSIS]</scope>
    <source>
        <strain>ADR376</strain>
    </source>
</reference>
<reference key="13">
    <citation type="journal article" date="2007" name="Proc. Natl. Acad. Sci. U.S.A.">
        <title>Analysis of phosphorylation sites on proteins from Saccharomyces cerevisiae by electron transfer dissociation (ETD) mass spectrometry.</title>
        <authorList>
            <person name="Chi A."/>
            <person name="Huttenhower C."/>
            <person name="Geer L.Y."/>
            <person name="Coon J.J."/>
            <person name="Syka J.E.P."/>
            <person name="Bai D.L."/>
            <person name="Shabanowitz J."/>
            <person name="Burke D.J."/>
            <person name="Troyanskaya O.G."/>
            <person name="Hunt D.F."/>
        </authorList>
    </citation>
    <scope>IDENTIFICATION BY MASS SPECTROMETRY [LARGE SCALE ANALYSIS]</scope>
</reference>
<reference key="14">
    <citation type="journal article" date="2008" name="J. Biol. Chem.">
        <title>Stoichiometry of the peripheral stalk subunits E and G of yeast V1-ATPase determined by mass spectrometry.</title>
        <authorList>
            <person name="Kitagawa N."/>
            <person name="Mazon H."/>
            <person name="Heck A.J.R."/>
            <person name="Wilkens S."/>
        </authorList>
    </citation>
    <scope>IDENTIFICATION IN THE V-ATPASE COMPLEX</scope>
    <scope>MASS SPECTROMETRY</scope>
    <scope>CLEAVAGE OF INITIATOR METHIONINE</scope>
</reference>
<reference key="15">
    <citation type="journal article" date="2008" name="Mol. Cell. Proteomics">
        <title>A multidimensional chromatography technology for in-depth phosphoproteome analysis.</title>
        <authorList>
            <person name="Albuquerque C.P."/>
            <person name="Smolka M.B."/>
            <person name="Payne S.H."/>
            <person name="Bafna V."/>
            <person name="Eng J."/>
            <person name="Zhou H."/>
        </authorList>
    </citation>
    <scope>PHOSPHORYLATION [LARGE SCALE ANALYSIS] AT SER-4; SER-137; SER-503 AND SER-504</scope>
    <scope>IDENTIFICATION BY MASS SPECTROMETRY [LARGE SCALE ANALYSIS]</scope>
</reference>
<reference key="16">
    <citation type="journal article" date="2009" name="Science">
        <title>Global analysis of Cdk1 substrate phosphorylation sites provides insights into evolution.</title>
        <authorList>
            <person name="Holt L.J."/>
            <person name="Tuch B.B."/>
            <person name="Villen J."/>
            <person name="Johnson A.D."/>
            <person name="Gygi S.P."/>
            <person name="Morgan D.O."/>
        </authorList>
    </citation>
    <scope>PHOSPHORYLATION [LARGE SCALE ANALYSIS] AT SER-137; SER-511 AND SER-515</scope>
    <scope>IDENTIFICATION BY MASS SPECTROMETRY [LARGE SCALE ANALYSIS]</scope>
</reference>
<reference key="17">
    <citation type="journal article" date="2012" name="Proteomics">
        <title>Sites of ubiquitin attachment in Saccharomyces cerevisiae.</title>
        <authorList>
            <person name="Starita L.M."/>
            <person name="Lo R.S."/>
            <person name="Eng J.K."/>
            <person name="von Haller P.D."/>
            <person name="Fields S."/>
        </authorList>
    </citation>
    <scope>UBIQUITINATION [LARGE SCALE ANALYSIS] AT LYS-14 AND LYS-508</scope>
    <scope>IDENTIFICATION BY MASS SPECTROMETRY [LARGE SCALE ANALYSIS]</scope>
</reference>
<reference evidence="10 11 12" key="18">
    <citation type="journal article" date="2015" name="Nature">
        <title>Electron cryomicroscopy observation of rotational states in a eukaryotic V-ATPase.</title>
        <authorList>
            <person name="Zhao J."/>
            <person name="Benlekbir S."/>
            <person name="Rubinstein J.L."/>
        </authorList>
    </citation>
    <scope>STRUCTURE BY ELECTRON MICROSCOPY (6.90 ANGSTROMS)</scope>
    <scope>IDENTIFICATION IN THE V-ATPASE COMPLEX</scope>
</reference>
<reference evidence="13 14" key="19">
    <citation type="journal article" date="2016" name="EMBO J.">
        <title>Crystal structure of yeast V1-ATPase in the autoinhibited state.</title>
        <authorList>
            <person name="Oot R.A."/>
            <person name="Kane P.M."/>
            <person name="Berry E.A."/>
            <person name="Wilkens S."/>
        </authorList>
    </citation>
    <scope>X-RAY CRYSTALLOGRAPHY (6.20 ANGSTROMS)</scope>
    <scope>IDENTIFICATION IN THE V-ATPASE COMPLEX</scope>
</reference>
<keyword id="KW-0002">3D-structure</keyword>
<keyword id="KW-0067">ATP-binding</keyword>
<keyword id="KW-0903">Direct protein sequencing</keyword>
<keyword id="KW-0375">Hydrogen ion transport</keyword>
<keyword id="KW-0406">Ion transport</keyword>
<keyword id="KW-1017">Isopeptide bond</keyword>
<keyword id="KW-0472">Membrane</keyword>
<keyword id="KW-0547">Nucleotide-binding</keyword>
<keyword id="KW-0597">Phosphoprotein</keyword>
<keyword id="KW-1185">Reference proteome</keyword>
<keyword id="KW-0813">Transport</keyword>
<keyword id="KW-0832">Ubl conjugation</keyword>
<keyword id="KW-0926">Vacuole</keyword>
<comment type="function">
    <text evidence="6">Non-catalytic subunit of the V1 complex of vacuolar(H+)-ATPase (V-ATPase), a multisubunit enzyme composed of a peripheral complex (V1) that hydrolyzes ATP and a membrane integral complex (V0) that translocates protons (PubMed:2141385). V-ATPase is responsible for acidifying and maintaining the pH of intracellular compartments (PubMed:2141385).</text>
</comment>
<comment type="subunit">
    <text evidence="3 5 7 8">V-ATPase is a heteromultimeric enzyme composed of a peripheral catalytic V1 complex (components A to H) attached to an integral membrane V0 proton pore complex (components: a, c, c', c'', d, e, f and VOA1) (PubMed:18055462, PubMed:25971514, PubMed:27295975). Interacts with RAV1 and RAV2 components of the RAVE complex, which are essential for the stability and assembly of V-ATPase (PubMed:11283612).</text>
</comment>
<comment type="interaction">
    <interactant intactId="EBI-20254">
        <id>P16140</id>
    </interactant>
    <interactant intactId="EBI-25471">
        <id>P47104</id>
        <label>RAV1</label>
    </interactant>
    <organismsDiffer>false</organismsDiffer>
    <experiments>4</experiments>
</comment>
<comment type="interaction">
    <interactant intactId="EBI-20254">
        <id>P16140</id>
    </interactant>
    <interactant intactId="EBI-30629">
        <id>Q03956</id>
        <label>RAV2</label>
    </interactant>
    <organismsDiffer>false</organismsDiffer>
    <experiments>2</experiments>
</comment>
<comment type="subcellular location">
    <subcellularLocation>
        <location evidence="6">Vacuole membrane</location>
        <topology evidence="9">Peripheral membrane protein</topology>
        <orientation evidence="9">Cytoplasmic side</orientation>
    </subcellularLocation>
</comment>
<comment type="mass spectrometry" mass="57630.5" error="32.2" method="Electrospray" evidence="5"/>
<comment type="miscellaneous">
    <text evidence="4">Present with 131000 molecules/cell in log phase SD medium.</text>
</comment>
<comment type="similarity">
    <text evidence="9">Belongs to the ATPase alpha/beta chains family.</text>
</comment>
<comment type="caution">
    <text evidence="9">PubMed:1371275 sequence was incorrectly thought to originate from bovine.</text>
</comment>
<gene>
    <name type="primary">VMA2</name>
    <name type="synonym">VAT2</name>
    <name type="ordered locus">YBR127C</name>
    <name type="ORF">YBR1002</name>
</gene>
<dbReference type="EMBL" id="J04450">
    <property type="protein sequence ID" value="AAA66890.1"/>
    <property type="molecule type" value="Genomic_DNA"/>
</dbReference>
<dbReference type="EMBL" id="X75891">
    <property type="protein sequence ID" value="CAA53486.1"/>
    <property type="molecule type" value="Genomic_DNA"/>
</dbReference>
<dbReference type="EMBL" id="Z35996">
    <property type="protein sequence ID" value="CAA85084.1"/>
    <property type="molecule type" value="Genomic_DNA"/>
</dbReference>
<dbReference type="EMBL" id="AY693158">
    <property type="protein sequence ID" value="AAT93177.1"/>
    <property type="molecule type" value="Genomic_DNA"/>
</dbReference>
<dbReference type="EMBL" id="M83130">
    <property type="protein sequence ID" value="AAA30389.1"/>
    <property type="molecule type" value="mRNA"/>
</dbReference>
<dbReference type="EMBL" id="BK006936">
    <property type="protein sequence ID" value="DAA07244.1"/>
    <property type="molecule type" value="Genomic_DNA"/>
</dbReference>
<dbReference type="PIR" id="B42254">
    <property type="entry name" value="B42254"/>
</dbReference>
<dbReference type="PIR" id="S45996">
    <property type="entry name" value="S45996"/>
</dbReference>
<dbReference type="RefSeq" id="NP_009685.3">
    <property type="nucleotide sequence ID" value="NM_001178475.3"/>
</dbReference>
<dbReference type="PDB" id="3J9T">
    <property type="method" value="EM"/>
    <property type="resolution" value="6.90 A"/>
    <property type="chains" value="B/D/F=1-517"/>
</dbReference>
<dbReference type="PDB" id="3J9U">
    <property type="method" value="EM"/>
    <property type="resolution" value="7.60 A"/>
    <property type="chains" value="B/D/F=1-517"/>
</dbReference>
<dbReference type="PDB" id="3J9V">
    <property type="method" value="EM"/>
    <property type="resolution" value="8.30 A"/>
    <property type="chains" value="B/D/F=1-517"/>
</dbReference>
<dbReference type="PDB" id="5BW9">
    <property type="method" value="X-ray"/>
    <property type="resolution" value="7.00 A"/>
    <property type="chains" value="D/E/F/d/e/f=1-517"/>
</dbReference>
<dbReference type="PDB" id="5D80">
    <property type="method" value="X-ray"/>
    <property type="resolution" value="6.20 A"/>
    <property type="chains" value="D/E/F/d/e/f=1-517"/>
</dbReference>
<dbReference type="PDB" id="5VOX">
    <property type="method" value="EM"/>
    <property type="resolution" value="6.80 A"/>
    <property type="chains" value="B/D/F=1-517"/>
</dbReference>
<dbReference type="PDB" id="5VOY">
    <property type="method" value="EM"/>
    <property type="resolution" value="7.90 A"/>
    <property type="chains" value="B/D/F=1-517"/>
</dbReference>
<dbReference type="PDB" id="5VOZ">
    <property type="method" value="EM"/>
    <property type="resolution" value="7.60 A"/>
    <property type="chains" value="B/D/F=1-517"/>
</dbReference>
<dbReference type="PDB" id="6O7V">
    <property type="method" value="EM"/>
    <property type="resolution" value="6.60 A"/>
    <property type="chains" value="B/D/F=1-517"/>
</dbReference>
<dbReference type="PDB" id="6O7W">
    <property type="method" value="EM"/>
    <property type="resolution" value="7.00 A"/>
    <property type="chains" value="B/D/F=1-517"/>
</dbReference>
<dbReference type="PDB" id="6O7X">
    <property type="method" value="EM"/>
    <property type="resolution" value="8.70 A"/>
    <property type="chains" value="B/D/F=1-517"/>
</dbReference>
<dbReference type="PDB" id="7FDA">
    <property type="method" value="EM"/>
    <property type="resolution" value="4.20 A"/>
    <property type="chains" value="B/D/F=1-517"/>
</dbReference>
<dbReference type="PDB" id="7FDB">
    <property type="method" value="EM"/>
    <property type="resolution" value="4.80 A"/>
    <property type="chains" value="B/D/F=1-517"/>
</dbReference>
<dbReference type="PDB" id="7FDC">
    <property type="method" value="EM"/>
    <property type="resolution" value="6.60 A"/>
    <property type="chains" value="B/D/F=1-517"/>
</dbReference>
<dbReference type="PDB" id="7FDE">
    <property type="method" value="EM"/>
    <property type="resolution" value="3.80 A"/>
    <property type="chains" value="B/D/F=1-517"/>
</dbReference>
<dbReference type="PDB" id="7TMM">
    <property type="method" value="EM"/>
    <property type="resolution" value="3.50 A"/>
    <property type="chains" value="B/D/F=1-517"/>
</dbReference>
<dbReference type="PDB" id="7TMO">
    <property type="method" value="EM"/>
    <property type="resolution" value="3.30 A"/>
    <property type="chains" value="B/D/F=1-517"/>
</dbReference>
<dbReference type="PDB" id="7TMP">
    <property type="method" value="EM"/>
    <property type="resolution" value="3.30 A"/>
    <property type="chains" value="B/D/F=1-517"/>
</dbReference>
<dbReference type="PDB" id="7TMQ">
    <property type="method" value="EM"/>
    <property type="resolution" value="3.30 A"/>
    <property type="chains" value="B/D/F=1-517"/>
</dbReference>
<dbReference type="PDB" id="7TMR">
    <property type="method" value="EM"/>
    <property type="resolution" value="3.50 A"/>
    <property type="chains" value="B/D/F=1-517"/>
</dbReference>
<dbReference type="PDB" id="9COP">
    <property type="method" value="EM"/>
    <property type="resolution" value="2.70 A"/>
    <property type="chains" value="B/F=1-517"/>
</dbReference>
<dbReference type="PDBsum" id="3J9T"/>
<dbReference type="PDBsum" id="3J9U"/>
<dbReference type="PDBsum" id="3J9V"/>
<dbReference type="PDBsum" id="5BW9"/>
<dbReference type="PDBsum" id="5D80"/>
<dbReference type="PDBsum" id="5VOX"/>
<dbReference type="PDBsum" id="5VOY"/>
<dbReference type="PDBsum" id="5VOZ"/>
<dbReference type="PDBsum" id="6O7V"/>
<dbReference type="PDBsum" id="6O7W"/>
<dbReference type="PDBsum" id="6O7X"/>
<dbReference type="PDBsum" id="7FDA"/>
<dbReference type="PDBsum" id="7FDB"/>
<dbReference type="PDBsum" id="7FDC"/>
<dbReference type="PDBsum" id="7FDE"/>
<dbReference type="PDBsum" id="7TMM"/>
<dbReference type="PDBsum" id="7TMO"/>
<dbReference type="PDBsum" id="7TMP"/>
<dbReference type="PDBsum" id="7TMQ"/>
<dbReference type="PDBsum" id="7TMR"/>
<dbReference type="PDBsum" id="9COP"/>
<dbReference type="EMDB" id="EMD-0646"/>
<dbReference type="EMDB" id="EMD-0647"/>
<dbReference type="EMDB" id="EMD-0648"/>
<dbReference type="EMDB" id="EMD-31538"/>
<dbReference type="EMDB" id="EMD-31539"/>
<dbReference type="EMDB" id="EMD-31540"/>
<dbReference type="EMDB" id="EMD-31541"/>
<dbReference type="EMDB" id="EMD-45788"/>
<dbReference type="EMDB" id="EMD-6284"/>
<dbReference type="EMDB" id="EMD-6285"/>
<dbReference type="EMDB" id="EMD-6286"/>
<dbReference type="EMDB" id="EMD-8724"/>
<dbReference type="EMDB" id="EMD-8725"/>
<dbReference type="EMDB" id="EMD-8726"/>
<dbReference type="SMR" id="P16140"/>
<dbReference type="BioGRID" id="32828">
    <property type="interactions" value="265"/>
</dbReference>
<dbReference type="ComplexPortal" id="CPX-1192">
    <property type="entry name" value="Vacuolar proton translocating ATPase complex, Golgi variant"/>
</dbReference>
<dbReference type="ComplexPortal" id="CPX-1193">
    <property type="entry name" value="Vacuolar proton translocating ATPase complex, vacuole variant"/>
</dbReference>
<dbReference type="DIP" id="DIP-2292N"/>
<dbReference type="FunCoup" id="P16140">
    <property type="interactions" value="2154"/>
</dbReference>
<dbReference type="IntAct" id="P16140">
    <property type="interactions" value="637"/>
</dbReference>
<dbReference type="MINT" id="P16140"/>
<dbReference type="STRING" id="4932.YBR127C"/>
<dbReference type="ChEMBL" id="CHEMBL6106"/>
<dbReference type="TCDB" id="3.A.2.2.3">
    <property type="family name" value="the h+- or na+-translocating f-type, v-type and a-type atpase (f-atpase) superfamily"/>
</dbReference>
<dbReference type="iPTMnet" id="P16140"/>
<dbReference type="PaxDb" id="4932-YBR127C"/>
<dbReference type="PeptideAtlas" id="P16140"/>
<dbReference type="EnsemblFungi" id="YBR127C_mRNA">
    <property type="protein sequence ID" value="YBR127C"/>
    <property type="gene ID" value="YBR127C"/>
</dbReference>
<dbReference type="GeneID" id="852424"/>
<dbReference type="KEGG" id="sce:YBR127C"/>
<dbReference type="AGR" id="SGD:S000000331"/>
<dbReference type="SGD" id="S000000331">
    <property type="gene designation" value="VMA2"/>
</dbReference>
<dbReference type="VEuPathDB" id="FungiDB:YBR127C"/>
<dbReference type="eggNOG" id="KOG1351">
    <property type="taxonomic scope" value="Eukaryota"/>
</dbReference>
<dbReference type="GeneTree" id="ENSGT00960000189262"/>
<dbReference type="HOGENOM" id="CLU_022916_3_0_1"/>
<dbReference type="InParanoid" id="P16140"/>
<dbReference type="OMA" id="EGFKIKP"/>
<dbReference type="OrthoDB" id="1735853at2759"/>
<dbReference type="BioCyc" id="YEAST:G3O-29082-MONOMER"/>
<dbReference type="Reactome" id="R-SCE-1222556">
    <property type="pathway name" value="ROS and RNS production in phagocytes"/>
</dbReference>
<dbReference type="Reactome" id="R-SCE-77387">
    <property type="pathway name" value="Insulin receptor recycling"/>
</dbReference>
<dbReference type="Reactome" id="R-SCE-917977">
    <property type="pathway name" value="Transferrin endocytosis and recycling"/>
</dbReference>
<dbReference type="Reactome" id="R-SCE-9639288">
    <property type="pathway name" value="Amino acids regulate mTORC1"/>
</dbReference>
<dbReference type="BioGRID-ORCS" id="852424">
    <property type="hits" value="7 hits in 10 CRISPR screens"/>
</dbReference>
<dbReference type="EvolutionaryTrace" id="P16140"/>
<dbReference type="PRO" id="PR:P16140"/>
<dbReference type="Proteomes" id="UP000002311">
    <property type="component" value="Chromosome II"/>
</dbReference>
<dbReference type="RNAct" id="P16140">
    <property type="molecule type" value="protein"/>
</dbReference>
<dbReference type="GO" id="GO:0005737">
    <property type="term" value="C:cytoplasm"/>
    <property type="evidence" value="ECO:0007005"/>
    <property type="project" value="SGD"/>
</dbReference>
<dbReference type="GO" id="GO:0010494">
    <property type="term" value="C:cytoplasmic stress granule"/>
    <property type="evidence" value="ECO:0007005"/>
    <property type="project" value="SGD"/>
</dbReference>
<dbReference type="GO" id="GO:0000329">
    <property type="term" value="C:fungal-type vacuole membrane"/>
    <property type="evidence" value="ECO:0000314"/>
    <property type="project" value="SGD"/>
</dbReference>
<dbReference type="GO" id="GO:0000139">
    <property type="term" value="C:Golgi membrane"/>
    <property type="evidence" value="ECO:0000303"/>
    <property type="project" value="ComplexPortal"/>
</dbReference>
<dbReference type="GO" id="GO:0045121">
    <property type="term" value="C:membrane raft"/>
    <property type="evidence" value="ECO:0000314"/>
    <property type="project" value="SGD"/>
</dbReference>
<dbReference type="GO" id="GO:0033176">
    <property type="term" value="C:proton-transporting V-type ATPase complex"/>
    <property type="evidence" value="ECO:0000353"/>
    <property type="project" value="ComplexPortal"/>
</dbReference>
<dbReference type="GO" id="GO:0016471">
    <property type="term" value="C:vacuolar proton-transporting V-type ATPase complex"/>
    <property type="evidence" value="ECO:0000353"/>
    <property type="project" value="ComplexPortal"/>
</dbReference>
<dbReference type="GO" id="GO:0000221">
    <property type="term" value="C:vacuolar proton-transporting V-type ATPase, V1 domain"/>
    <property type="evidence" value="ECO:0000314"/>
    <property type="project" value="UniProtKB"/>
</dbReference>
<dbReference type="GO" id="GO:1990816">
    <property type="term" value="C:vacuole-mitochondrion membrane contact site"/>
    <property type="evidence" value="ECO:0000314"/>
    <property type="project" value="SGD"/>
</dbReference>
<dbReference type="GO" id="GO:0005524">
    <property type="term" value="F:ATP binding"/>
    <property type="evidence" value="ECO:0007669"/>
    <property type="project" value="UniProtKB-KW"/>
</dbReference>
<dbReference type="GO" id="GO:0046961">
    <property type="term" value="F:proton-transporting ATPase activity, rotational mechanism"/>
    <property type="evidence" value="ECO:0000315"/>
    <property type="project" value="SGD"/>
</dbReference>
<dbReference type="GO" id="GO:0046034">
    <property type="term" value="P:ATP metabolic process"/>
    <property type="evidence" value="ECO:0007669"/>
    <property type="project" value="InterPro"/>
</dbReference>
<dbReference type="GO" id="GO:0048388">
    <property type="term" value="P:endosomal lumen acidification"/>
    <property type="evidence" value="ECO:0000303"/>
    <property type="project" value="ComplexPortal"/>
</dbReference>
<dbReference type="GO" id="GO:0061795">
    <property type="term" value="P:Golgi lumen acidification"/>
    <property type="evidence" value="ECO:0000303"/>
    <property type="project" value="ComplexPortal"/>
</dbReference>
<dbReference type="GO" id="GO:0006874">
    <property type="term" value="P:intracellular calcium ion homeostasis"/>
    <property type="evidence" value="ECO:0000315"/>
    <property type="project" value="SGD"/>
</dbReference>
<dbReference type="GO" id="GO:0000425">
    <property type="term" value="P:pexophagy"/>
    <property type="evidence" value="ECO:0000315"/>
    <property type="project" value="SGD"/>
</dbReference>
<dbReference type="GO" id="GO:1902906">
    <property type="term" value="P:proteasome storage granule assembly"/>
    <property type="evidence" value="ECO:0000315"/>
    <property type="project" value="SGD"/>
</dbReference>
<dbReference type="GO" id="GO:1902600">
    <property type="term" value="P:proton transmembrane transport"/>
    <property type="evidence" value="ECO:0000314"/>
    <property type="project" value="ComplexPortal"/>
</dbReference>
<dbReference type="GO" id="GO:0055085">
    <property type="term" value="P:transmembrane transport"/>
    <property type="evidence" value="ECO:0000315"/>
    <property type="project" value="SGD"/>
</dbReference>
<dbReference type="GO" id="GO:0007035">
    <property type="term" value="P:vacuolar acidification"/>
    <property type="evidence" value="ECO:0000315"/>
    <property type="project" value="SGD"/>
</dbReference>
<dbReference type="CDD" id="cd18112">
    <property type="entry name" value="ATP-synt_V_A-type_beta_C"/>
    <property type="match status" value="1"/>
</dbReference>
<dbReference type="CDD" id="cd18118">
    <property type="entry name" value="ATP-synt_V_A-type_beta_N"/>
    <property type="match status" value="1"/>
</dbReference>
<dbReference type="CDD" id="cd01135">
    <property type="entry name" value="V_A-ATPase_B"/>
    <property type="match status" value="1"/>
</dbReference>
<dbReference type="FunFam" id="3.40.50.12240:FF:000001">
    <property type="entry name" value="V-type proton ATPase subunit B, brain"/>
    <property type="match status" value="1"/>
</dbReference>
<dbReference type="Gene3D" id="3.40.50.12240">
    <property type="match status" value="1"/>
</dbReference>
<dbReference type="HAMAP" id="MF_00310">
    <property type="entry name" value="ATP_synth_B_arch"/>
    <property type="match status" value="1"/>
</dbReference>
<dbReference type="InterPro" id="IPR055190">
    <property type="entry name" value="ATP-synt_VA_C"/>
</dbReference>
<dbReference type="InterPro" id="IPR020003">
    <property type="entry name" value="ATPase_a/bsu_AS"/>
</dbReference>
<dbReference type="InterPro" id="IPR004100">
    <property type="entry name" value="ATPase_F1/V1/A1_a/bsu_N"/>
</dbReference>
<dbReference type="InterPro" id="IPR000194">
    <property type="entry name" value="ATPase_F1/V1/A1_a/bsu_nucl-bd"/>
</dbReference>
<dbReference type="InterPro" id="IPR005723">
    <property type="entry name" value="ATPase_V1-cplx_bsu"/>
</dbReference>
<dbReference type="InterPro" id="IPR027417">
    <property type="entry name" value="P-loop_NTPase"/>
</dbReference>
<dbReference type="InterPro" id="IPR022879">
    <property type="entry name" value="V-ATPase_su_B/beta"/>
</dbReference>
<dbReference type="NCBIfam" id="NF003235">
    <property type="entry name" value="PRK04196.1"/>
    <property type="match status" value="1"/>
</dbReference>
<dbReference type="NCBIfam" id="TIGR01040">
    <property type="entry name" value="V-ATPase_V1_B"/>
    <property type="match status" value="1"/>
</dbReference>
<dbReference type="PANTHER" id="PTHR43389">
    <property type="entry name" value="V-TYPE PROTON ATPASE SUBUNIT B"/>
    <property type="match status" value="1"/>
</dbReference>
<dbReference type="PANTHER" id="PTHR43389:SF4">
    <property type="entry name" value="V-TYPE PROTON ATPASE SUBUNIT B"/>
    <property type="match status" value="1"/>
</dbReference>
<dbReference type="Pfam" id="PF00006">
    <property type="entry name" value="ATP-synt_ab"/>
    <property type="match status" value="1"/>
</dbReference>
<dbReference type="Pfam" id="PF02874">
    <property type="entry name" value="ATP-synt_ab_N"/>
    <property type="match status" value="1"/>
</dbReference>
<dbReference type="Pfam" id="PF22919">
    <property type="entry name" value="ATP-synt_VA_C"/>
    <property type="match status" value="1"/>
</dbReference>
<dbReference type="PIRSF" id="PIRSF039114">
    <property type="entry name" value="V-ATPsynth_beta/V-ATPase_B"/>
    <property type="match status" value="1"/>
</dbReference>
<dbReference type="SUPFAM" id="SSF52540">
    <property type="entry name" value="P-loop containing nucleoside triphosphate hydrolases"/>
    <property type="match status" value="1"/>
</dbReference>
<dbReference type="PROSITE" id="PS00152">
    <property type="entry name" value="ATPASE_ALPHA_BETA"/>
    <property type="match status" value="1"/>
</dbReference>